<feature type="chain" id="PRO_1000023401" description="Translational regulator CsrA">
    <location>
        <begin position="1"/>
        <end position="64"/>
    </location>
</feature>
<gene>
    <name evidence="1" type="primary">csrA</name>
    <name type="ordered locus">MCA0391</name>
</gene>
<protein>
    <recommendedName>
        <fullName evidence="1">Translational regulator CsrA</fullName>
    </recommendedName>
    <alternativeName>
        <fullName evidence="1">Carbon storage regulator</fullName>
    </alternativeName>
</protein>
<keyword id="KW-0010">Activator</keyword>
<keyword id="KW-0963">Cytoplasm</keyword>
<keyword id="KW-1185">Reference proteome</keyword>
<keyword id="KW-0678">Repressor</keyword>
<keyword id="KW-0694">RNA-binding</keyword>
<keyword id="KW-0810">Translation regulation</keyword>
<sequence length="64" mass="7142">MLILTRRVGETLMIGDDVTVTVLGVKGNQVRIGVNAPKDVSVHREEIYERIKKEQQAGPEHDSD</sequence>
<name>CSRA_METCA</name>
<reference key="1">
    <citation type="journal article" date="2004" name="PLoS Biol.">
        <title>Genomic insights into methanotrophy: the complete genome sequence of Methylococcus capsulatus (Bath).</title>
        <authorList>
            <person name="Ward N.L."/>
            <person name="Larsen O."/>
            <person name="Sakwa J."/>
            <person name="Bruseth L."/>
            <person name="Khouri H.M."/>
            <person name="Durkin A.S."/>
            <person name="Dimitrov G."/>
            <person name="Jiang L."/>
            <person name="Scanlan D."/>
            <person name="Kang K.H."/>
            <person name="Lewis M.R."/>
            <person name="Nelson K.E."/>
            <person name="Methe B.A."/>
            <person name="Wu M."/>
            <person name="Heidelberg J.F."/>
            <person name="Paulsen I.T."/>
            <person name="Fouts D.E."/>
            <person name="Ravel J."/>
            <person name="Tettelin H."/>
            <person name="Ren Q."/>
            <person name="Read T.D."/>
            <person name="DeBoy R.T."/>
            <person name="Seshadri R."/>
            <person name="Salzberg S.L."/>
            <person name="Jensen H.B."/>
            <person name="Birkeland N.K."/>
            <person name="Nelson W.C."/>
            <person name="Dodson R.J."/>
            <person name="Grindhaug S.H."/>
            <person name="Holt I.E."/>
            <person name="Eidhammer I."/>
            <person name="Jonasen I."/>
            <person name="Vanaken S."/>
            <person name="Utterback T.R."/>
            <person name="Feldblyum T.V."/>
            <person name="Fraser C.M."/>
            <person name="Lillehaug J.R."/>
            <person name="Eisen J.A."/>
        </authorList>
    </citation>
    <scope>NUCLEOTIDE SEQUENCE [LARGE SCALE GENOMIC DNA]</scope>
    <source>
        <strain>ATCC 33009 / NCIMB 11132 / Bath</strain>
    </source>
</reference>
<evidence type="ECO:0000255" key="1">
    <source>
        <dbReference type="HAMAP-Rule" id="MF_00167"/>
    </source>
</evidence>
<comment type="function">
    <text evidence="1">A key translational regulator that binds mRNA to regulate translation initiation and/or mRNA stability. Mediates global changes in gene expression, shifting from rapid growth to stress survival by linking envelope stress, the stringent response and the catabolite repression systems. Usually binds in the 5'-UTR; binding at or near the Shine-Dalgarno sequence prevents ribosome-binding, repressing translation, binding elsewhere in the 5'-UTR can activate translation and/or stabilize the mRNA. Its function is antagonized by small RNA(s).</text>
</comment>
<comment type="subunit">
    <text evidence="1">Homodimer; the beta-strands of each monomer intercalate to form a hydrophobic core, while the alpha-helices form wings that extend away from the core.</text>
</comment>
<comment type="subcellular location">
    <subcellularLocation>
        <location evidence="1">Cytoplasm</location>
    </subcellularLocation>
</comment>
<comment type="similarity">
    <text evidence="1">Belongs to the CsrA/RsmA family.</text>
</comment>
<dbReference type="EMBL" id="AE017282">
    <property type="protein sequence ID" value="AAU90473.1"/>
    <property type="molecule type" value="Genomic_DNA"/>
</dbReference>
<dbReference type="RefSeq" id="WP_010959751.1">
    <property type="nucleotide sequence ID" value="NC_002977.6"/>
</dbReference>
<dbReference type="SMR" id="Q60BS4"/>
<dbReference type="STRING" id="243233.MCA0391"/>
<dbReference type="GeneID" id="88222732"/>
<dbReference type="KEGG" id="mca:MCA0391"/>
<dbReference type="eggNOG" id="COG1551">
    <property type="taxonomic scope" value="Bacteria"/>
</dbReference>
<dbReference type="HOGENOM" id="CLU_164837_2_1_6"/>
<dbReference type="Proteomes" id="UP000006821">
    <property type="component" value="Chromosome"/>
</dbReference>
<dbReference type="GO" id="GO:0005829">
    <property type="term" value="C:cytosol"/>
    <property type="evidence" value="ECO:0007669"/>
    <property type="project" value="TreeGrafter"/>
</dbReference>
<dbReference type="GO" id="GO:0048027">
    <property type="term" value="F:mRNA 5'-UTR binding"/>
    <property type="evidence" value="ECO:0007669"/>
    <property type="project" value="UniProtKB-UniRule"/>
</dbReference>
<dbReference type="GO" id="GO:0006402">
    <property type="term" value="P:mRNA catabolic process"/>
    <property type="evidence" value="ECO:0007669"/>
    <property type="project" value="InterPro"/>
</dbReference>
<dbReference type="GO" id="GO:0045947">
    <property type="term" value="P:negative regulation of translational initiation"/>
    <property type="evidence" value="ECO:0007669"/>
    <property type="project" value="UniProtKB-UniRule"/>
</dbReference>
<dbReference type="GO" id="GO:0045948">
    <property type="term" value="P:positive regulation of translational initiation"/>
    <property type="evidence" value="ECO:0007669"/>
    <property type="project" value="UniProtKB-UniRule"/>
</dbReference>
<dbReference type="GO" id="GO:0006109">
    <property type="term" value="P:regulation of carbohydrate metabolic process"/>
    <property type="evidence" value="ECO:0007669"/>
    <property type="project" value="UniProtKB-UniRule"/>
</dbReference>
<dbReference type="FunFam" id="2.60.40.4380:FF:000001">
    <property type="entry name" value="Translational regulator CsrA"/>
    <property type="match status" value="1"/>
</dbReference>
<dbReference type="Gene3D" id="2.60.40.4380">
    <property type="entry name" value="Translational regulator CsrA"/>
    <property type="match status" value="1"/>
</dbReference>
<dbReference type="HAMAP" id="MF_00167">
    <property type="entry name" value="CsrA"/>
    <property type="match status" value="1"/>
</dbReference>
<dbReference type="InterPro" id="IPR003751">
    <property type="entry name" value="CsrA"/>
</dbReference>
<dbReference type="InterPro" id="IPR036107">
    <property type="entry name" value="CsrA_sf"/>
</dbReference>
<dbReference type="NCBIfam" id="TIGR00202">
    <property type="entry name" value="csrA"/>
    <property type="match status" value="1"/>
</dbReference>
<dbReference type="NCBIfam" id="NF002469">
    <property type="entry name" value="PRK01712.1"/>
    <property type="match status" value="1"/>
</dbReference>
<dbReference type="PANTHER" id="PTHR34984">
    <property type="entry name" value="CARBON STORAGE REGULATOR"/>
    <property type="match status" value="1"/>
</dbReference>
<dbReference type="PANTHER" id="PTHR34984:SF1">
    <property type="entry name" value="CARBON STORAGE REGULATOR"/>
    <property type="match status" value="1"/>
</dbReference>
<dbReference type="Pfam" id="PF02599">
    <property type="entry name" value="CsrA"/>
    <property type="match status" value="1"/>
</dbReference>
<dbReference type="SUPFAM" id="SSF117130">
    <property type="entry name" value="CsrA-like"/>
    <property type="match status" value="1"/>
</dbReference>
<proteinExistence type="inferred from homology"/>
<accession>Q60BS4</accession>
<organism>
    <name type="scientific">Methylococcus capsulatus (strain ATCC 33009 / NCIMB 11132 / Bath)</name>
    <dbReference type="NCBI Taxonomy" id="243233"/>
    <lineage>
        <taxon>Bacteria</taxon>
        <taxon>Pseudomonadati</taxon>
        <taxon>Pseudomonadota</taxon>
        <taxon>Gammaproteobacteria</taxon>
        <taxon>Methylococcales</taxon>
        <taxon>Methylococcaceae</taxon>
        <taxon>Methylococcus</taxon>
    </lineage>
</organism>